<feature type="chain" id="PRO_1000090392" description="Holliday junction branch migration complex subunit RuvA">
    <location>
        <begin position="1"/>
        <end position="204"/>
    </location>
</feature>
<feature type="region of interest" description="Domain I" evidence="1">
    <location>
        <begin position="1"/>
        <end position="64"/>
    </location>
</feature>
<feature type="region of interest" description="Domain II" evidence="1">
    <location>
        <begin position="65"/>
        <end position="142"/>
    </location>
</feature>
<feature type="region of interest" description="Flexible linker" evidence="1">
    <location>
        <begin position="143"/>
        <end position="155"/>
    </location>
</feature>
<feature type="region of interest" description="Domain III" evidence="1">
    <location>
        <begin position="156"/>
        <end position="204"/>
    </location>
</feature>
<keyword id="KW-0963">Cytoplasm</keyword>
<keyword id="KW-0227">DNA damage</keyword>
<keyword id="KW-0233">DNA recombination</keyword>
<keyword id="KW-0234">DNA repair</keyword>
<keyword id="KW-0238">DNA-binding</keyword>
<proteinExistence type="inferred from homology"/>
<reference key="1">
    <citation type="submission" date="2008-02" db="EMBL/GenBank/DDBJ databases">
        <title>Complete sequence of Yersinia pseudotuberculosis YPIII.</title>
        <authorList>
            <consortium name="US DOE Joint Genome Institute"/>
            <person name="Copeland A."/>
            <person name="Lucas S."/>
            <person name="Lapidus A."/>
            <person name="Glavina del Rio T."/>
            <person name="Dalin E."/>
            <person name="Tice H."/>
            <person name="Bruce D."/>
            <person name="Goodwin L."/>
            <person name="Pitluck S."/>
            <person name="Munk A.C."/>
            <person name="Brettin T."/>
            <person name="Detter J.C."/>
            <person name="Han C."/>
            <person name="Tapia R."/>
            <person name="Schmutz J."/>
            <person name="Larimer F."/>
            <person name="Land M."/>
            <person name="Hauser L."/>
            <person name="Challacombe J.F."/>
            <person name="Green L."/>
            <person name="Lindler L.E."/>
            <person name="Nikolich M.P."/>
            <person name="Richardson P."/>
        </authorList>
    </citation>
    <scope>NUCLEOTIDE SEQUENCE [LARGE SCALE GENOMIC DNA]</scope>
    <source>
        <strain>YPIII</strain>
    </source>
</reference>
<organism>
    <name type="scientific">Yersinia pseudotuberculosis serotype O:3 (strain YPIII)</name>
    <dbReference type="NCBI Taxonomy" id="502800"/>
    <lineage>
        <taxon>Bacteria</taxon>
        <taxon>Pseudomonadati</taxon>
        <taxon>Pseudomonadota</taxon>
        <taxon>Gammaproteobacteria</taxon>
        <taxon>Enterobacterales</taxon>
        <taxon>Yersiniaceae</taxon>
        <taxon>Yersinia</taxon>
    </lineage>
</organism>
<gene>
    <name evidence="1" type="primary">ruvA</name>
    <name type="ordered locus">YPK_2144</name>
</gene>
<dbReference type="EMBL" id="CP000950">
    <property type="protein sequence ID" value="ACA68430.1"/>
    <property type="molecule type" value="Genomic_DNA"/>
</dbReference>
<dbReference type="RefSeq" id="WP_002211199.1">
    <property type="nucleotide sequence ID" value="NZ_CP009792.1"/>
</dbReference>
<dbReference type="SMR" id="B1JLL1"/>
<dbReference type="GeneID" id="57976604"/>
<dbReference type="KEGG" id="ypy:YPK_2144"/>
<dbReference type="PATRIC" id="fig|502800.11.peg.2817"/>
<dbReference type="GO" id="GO:0005737">
    <property type="term" value="C:cytoplasm"/>
    <property type="evidence" value="ECO:0007669"/>
    <property type="project" value="UniProtKB-SubCell"/>
</dbReference>
<dbReference type="GO" id="GO:0009379">
    <property type="term" value="C:Holliday junction helicase complex"/>
    <property type="evidence" value="ECO:0007669"/>
    <property type="project" value="InterPro"/>
</dbReference>
<dbReference type="GO" id="GO:0048476">
    <property type="term" value="C:Holliday junction resolvase complex"/>
    <property type="evidence" value="ECO:0007669"/>
    <property type="project" value="UniProtKB-UniRule"/>
</dbReference>
<dbReference type="GO" id="GO:0005524">
    <property type="term" value="F:ATP binding"/>
    <property type="evidence" value="ECO:0007669"/>
    <property type="project" value="InterPro"/>
</dbReference>
<dbReference type="GO" id="GO:0000400">
    <property type="term" value="F:four-way junction DNA binding"/>
    <property type="evidence" value="ECO:0007669"/>
    <property type="project" value="UniProtKB-UniRule"/>
</dbReference>
<dbReference type="GO" id="GO:0009378">
    <property type="term" value="F:four-way junction helicase activity"/>
    <property type="evidence" value="ECO:0007669"/>
    <property type="project" value="InterPro"/>
</dbReference>
<dbReference type="GO" id="GO:0006310">
    <property type="term" value="P:DNA recombination"/>
    <property type="evidence" value="ECO:0007669"/>
    <property type="project" value="UniProtKB-UniRule"/>
</dbReference>
<dbReference type="GO" id="GO:0006281">
    <property type="term" value="P:DNA repair"/>
    <property type="evidence" value="ECO:0007669"/>
    <property type="project" value="UniProtKB-UniRule"/>
</dbReference>
<dbReference type="CDD" id="cd14332">
    <property type="entry name" value="UBA_RuvA_C"/>
    <property type="match status" value="1"/>
</dbReference>
<dbReference type="FunFam" id="1.10.150.20:FF:000012">
    <property type="entry name" value="Holliday junction ATP-dependent DNA helicase RuvA"/>
    <property type="match status" value="1"/>
</dbReference>
<dbReference type="FunFam" id="2.40.50.140:FF:000083">
    <property type="entry name" value="Holliday junction ATP-dependent DNA helicase RuvA"/>
    <property type="match status" value="1"/>
</dbReference>
<dbReference type="Gene3D" id="1.10.150.20">
    <property type="entry name" value="5' to 3' exonuclease, C-terminal subdomain"/>
    <property type="match status" value="1"/>
</dbReference>
<dbReference type="Gene3D" id="1.10.8.10">
    <property type="entry name" value="DNA helicase RuvA subunit, C-terminal domain"/>
    <property type="match status" value="1"/>
</dbReference>
<dbReference type="Gene3D" id="2.40.50.140">
    <property type="entry name" value="Nucleic acid-binding proteins"/>
    <property type="match status" value="1"/>
</dbReference>
<dbReference type="HAMAP" id="MF_00031">
    <property type="entry name" value="DNA_HJ_migration_RuvA"/>
    <property type="match status" value="1"/>
</dbReference>
<dbReference type="InterPro" id="IPR013849">
    <property type="entry name" value="DNA_helicase_Holl-junc_RuvA_I"/>
</dbReference>
<dbReference type="InterPro" id="IPR003583">
    <property type="entry name" value="Hlx-hairpin-Hlx_DNA-bd_motif"/>
</dbReference>
<dbReference type="InterPro" id="IPR012340">
    <property type="entry name" value="NA-bd_OB-fold"/>
</dbReference>
<dbReference type="InterPro" id="IPR000085">
    <property type="entry name" value="RuvA"/>
</dbReference>
<dbReference type="InterPro" id="IPR010994">
    <property type="entry name" value="RuvA_2-like"/>
</dbReference>
<dbReference type="InterPro" id="IPR011114">
    <property type="entry name" value="RuvA_C"/>
</dbReference>
<dbReference type="InterPro" id="IPR036267">
    <property type="entry name" value="RuvA_C_sf"/>
</dbReference>
<dbReference type="NCBIfam" id="TIGR00084">
    <property type="entry name" value="ruvA"/>
    <property type="match status" value="1"/>
</dbReference>
<dbReference type="Pfam" id="PF14520">
    <property type="entry name" value="HHH_5"/>
    <property type="match status" value="1"/>
</dbReference>
<dbReference type="Pfam" id="PF07499">
    <property type="entry name" value="RuvA_C"/>
    <property type="match status" value="1"/>
</dbReference>
<dbReference type="Pfam" id="PF01330">
    <property type="entry name" value="RuvA_N"/>
    <property type="match status" value="1"/>
</dbReference>
<dbReference type="SMART" id="SM00278">
    <property type="entry name" value="HhH1"/>
    <property type="match status" value="2"/>
</dbReference>
<dbReference type="SUPFAM" id="SSF46929">
    <property type="entry name" value="DNA helicase RuvA subunit, C-terminal domain"/>
    <property type="match status" value="1"/>
</dbReference>
<dbReference type="SUPFAM" id="SSF50249">
    <property type="entry name" value="Nucleic acid-binding proteins"/>
    <property type="match status" value="1"/>
</dbReference>
<dbReference type="SUPFAM" id="SSF47781">
    <property type="entry name" value="RuvA domain 2-like"/>
    <property type="match status" value="1"/>
</dbReference>
<evidence type="ECO:0000255" key="1">
    <source>
        <dbReference type="HAMAP-Rule" id="MF_00031"/>
    </source>
</evidence>
<sequence length="204" mass="22188">MIGRLRGIILEKQPPLVLLETNGVGYEVQLPMTCFYELPELGQEAIIFTQFVVREDAQLLYGFNNKQERALFRELIKVNGVGPKLALAILSGMSAQQFVGAVEREDITTLVKLPGVGKKTAERLVVEMKDRFKGLNGDLFNNTGDISLPTASPQTSDADIEAEAASALVALGYKPQEASRLVSKIAKPGADCETLIRDALRAAL</sequence>
<accession>B1JLL1</accession>
<protein>
    <recommendedName>
        <fullName evidence="1">Holliday junction branch migration complex subunit RuvA</fullName>
    </recommendedName>
</protein>
<name>RUVA_YERPY</name>
<comment type="function">
    <text evidence="1">The RuvA-RuvB-RuvC complex processes Holliday junction (HJ) DNA during genetic recombination and DNA repair, while the RuvA-RuvB complex plays an important role in the rescue of blocked DNA replication forks via replication fork reversal (RFR). RuvA specifically binds to HJ cruciform DNA, conferring on it an open structure. The RuvB hexamer acts as an ATP-dependent pump, pulling dsDNA into and through the RuvAB complex. HJ branch migration allows RuvC to scan DNA until it finds its consensus sequence, where it cleaves and resolves the cruciform DNA.</text>
</comment>
<comment type="subunit">
    <text evidence="1">Homotetramer. Forms an RuvA(8)-RuvB(12)-Holliday junction (HJ) complex. HJ DNA is sandwiched between 2 RuvA tetramers; dsDNA enters through RuvA and exits via RuvB. An RuvB hexamer assembles on each DNA strand where it exits the tetramer. Each RuvB hexamer is contacted by two RuvA subunits (via domain III) on 2 adjacent RuvB subunits; this complex drives branch migration. In the full resolvosome a probable DNA-RuvA(4)-RuvB(12)-RuvC(2) complex forms which resolves the HJ.</text>
</comment>
<comment type="subcellular location">
    <subcellularLocation>
        <location evidence="1">Cytoplasm</location>
    </subcellularLocation>
</comment>
<comment type="domain">
    <text evidence="1">Has three domains with a flexible linker between the domains II and III and assumes an 'L' shape. Domain III is highly mobile and contacts RuvB.</text>
</comment>
<comment type="similarity">
    <text evidence="1">Belongs to the RuvA family.</text>
</comment>